<gene>
    <name type="ordered locus">ELI_04860</name>
</gene>
<feature type="chain" id="PRO_0000361290" description="Blue-light-activated histidine kinase 2">
    <location>
        <begin position="1"/>
        <end position="346"/>
    </location>
</feature>
<feature type="domain" description="PAS" evidence="2">
    <location>
        <begin position="8"/>
        <end position="82"/>
    </location>
</feature>
<feature type="domain" description="PAC" evidence="3">
    <location>
        <begin position="79"/>
        <end position="133"/>
    </location>
</feature>
<feature type="domain" description="Histidine kinase" evidence="1">
    <location>
        <begin position="139"/>
        <end position="334"/>
    </location>
</feature>
<feature type="modified residue" description="S-4a-FMN cysteine">
    <location>
        <position position="55"/>
    </location>
</feature>
<feature type="modified residue" description="Phosphohistidine; by autocatalysis" evidence="1">
    <location>
        <position position="142"/>
    </location>
</feature>
<feature type="helix" evidence="7">
    <location>
        <begin position="10"/>
        <end position="14"/>
    </location>
</feature>
<feature type="strand" evidence="5">
    <location>
        <begin position="17"/>
        <end position="24"/>
    </location>
</feature>
<feature type="strand" evidence="5">
    <location>
        <begin position="32"/>
        <end position="35"/>
    </location>
</feature>
<feature type="helix" evidence="5">
    <location>
        <begin position="37"/>
        <end position="43"/>
    </location>
</feature>
<feature type="helix" evidence="5">
    <location>
        <begin position="47"/>
        <end position="50"/>
    </location>
</feature>
<feature type="helix" evidence="5">
    <location>
        <begin position="55"/>
        <end position="58"/>
    </location>
</feature>
<feature type="helix" evidence="5">
    <location>
        <begin position="65"/>
        <end position="76"/>
    </location>
</feature>
<feature type="strand" evidence="5">
    <location>
        <begin position="81"/>
        <end position="88"/>
    </location>
</feature>
<feature type="strand" evidence="5">
    <location>
        <begin position="94"/>
        <end position="104"/>
    </location>
</feature>
<feature type="strand" evidence="5">
    <location>
        <begin position="113"/>
        <end position="120"/>
    </location>
</feature>
<feature type="helix" evidence="6">
    <location>
        <begin position="130"/>
        <end position="141"/>
    </location>
</feature>
<feature type="helix" evidence="6">
    <location>
        <begin position="146"/>
        <end position="162"/>
    </location>
</feature>
<feature type="helix" evidence="6">
    <location>
        <begin position="172"/>
        <end position="189"/>
    </location>
</feature>
<feature type="helix" evidence="6">
    <location>
        <begin position="201"/>
        <end position="216"/>
    </location>
</feature>
<feature type="strand" evidence="6">
    <location>
        <begin position="221"/>
        <end position="227"/>
    </location>
</feature>
<feature type="helix" evidence="6">
    <location>
        <begin position="234"/>
        <end position="254"/>
    </location>
</feature>
<feature type="turn" evidence="6">
    <location>
        <begin position="255"/>
        <end position="258"/>
    </location>
</feature>
<feature type="strand" evidence="6">
    <location>
        <begin position="262"/>
        <end position="270"/>
    </location>
</feature>
<feature type="helix" evidence="6">
    <location>
        <begin position="272"/>
        <end position="274"/>
    </location>
</feature>
<feature type="strand" evidence="6">
    <location>
        <begin position="275"/>
        <end position="282"/>
    </location>
</feature>
<feature type="turn" evidence="6">
    <location>
        <begin position="293"/>
        <end position="295"/>
    </location>
</feature>
<feature type="strand" evidence="6">
    <location>
        <begin position="296"/>
        <end position="298"/>
    </location>
</feature>
<feature type="helix" evidence="6">
    <location>
        <begin position="299"/>
        <end position="310"/>
    </location>
</feature>
<feature type="strand" evidence="6">
    <location>
        <begin position="314"/>
        <end position="318"/>
    </location>
</feature>
<feature type="strand" evidence="6">
    <location>
        <begin position="325"/>
        <end position="331"/>
    </location>
</feature>
<feature type="helix" evidence="6">
    <location>
        <begin position="332"/>
        <end position="334"/>
    </location>
</feature>
<feature type="helix" evidence="6">
    <location>
        <begin position="335"/>
        <end position="341"/>
    </location>
</feature>
<accession>Q2NB77</accession>
<organism>
    <name type="scientific">Erythrobacter litoralis (strain HTCC2594)</name>
    <dbReference type="NCBI Taxonomy" id="314225"/>
    <lineage>
        <taxon>Bacteria</taxon>
        <taxon>Pseudomonadati</taxon>
        <taxon>Pseudomonadota</taxon>
        <taxon>Alphaproteobacteria</taxon>
        <taxon>Sphingomonadales</taxon>
        <taxon>Erythrobacteraceae</taxon>
        <taxon>Erythrobacter/Porphyrobacter group</taxon>
        <taxon>Erythrobacter</taxon>
    </lineage>
</organism>
<evidence type="ECO:0000255" key="1">
    <source>
        <dbReference type="PROSITE-ProRule" id="PRU00107"/>
    </source>
</evidence>
<evidence type="ECO:0000255" key="2">
    <source>
        <dbReference type="PROSITE-ProRule" id="PRU00140"/>
    </source>
</evidence>
<evidence type="ECO:0000255" key="3">
    <source>
        <dbReference type="PROSITE-ProRule" id="PRU00141"/>
    </source>
</evidence>
<evidence type="ECO:0000269" key="4">
    <source>
    </source>
</evidence>
<evidence type="ECO:0007829" key="5">
    <source>
        <dbReference type="PDB" id="4R38"/>
    </source>
</evidence>
<evidence type="ECO:0007829" key="6">
    <source>
        <dbReference type="PDB" id="4R39"/>
    </source>
</evidence>
<evidence type="ECO:0007829" key="7">
    <source>
        <dbReference type="PDB" id="4R3A"/>
    </source>
</evidence>
<reference key="1">
    <citation type="journal article" date="2009" name="J. Bacteriol.">
        <title>Complete genome sequence of Erythrobacter litoralis HTCC2594.</title>
        <authorList>
            <person name="Oh H.M."/>
            <person name="Giovannoni S.J."/>
            <person name="Ferriera S."/>
            <person name="Johnson J."/>
            <person name="Cho J.C."/>
        </authorList>
    </citation>
    <scope>NUCLEOTIDE SEQUENCE [LARGE SCALE GENOMIC DNA]</scope>
    <source>
        <strain>HTCC2594</strain>
    </source>
</reference>
<reference key="2">
    <citation type="journal article" date="2007" name="Science">
        <title>Blue-light-activated histidine kinases: two-component sensors in bacteria.</title>
        <authorList>
            <person name="Swartz T.E."/>
            <person name="Tseng T.-S."/>
            <person name="Frederickson M.A."/>
            <person name="Paris G."/>
            <person name="Comerci D.J."/>
            <person name="Rajashekara G."/>
            <person name="Kim J.-G."/>
            <person name="Mudgett M.B."/>
            <person name="Splitter G.A."/>
            <person name="Ugalde R.A."/>
            <person name="Goldbaum F.A."/>
            <person name="Briggs W.R."/>
            <person name="Bogomolni R.A."/>
        </authorList>
    </citation>
    <scope>FUNCTION IN LIGHT SENSING</scope>
    <scope>FLAVIN CHROMOPHORE</scope>
    <scope>KINASE ACTIVITY</scope>
    <scope>ROLE IN VIRULENCE</scope>
</reference>
<name>LVHK2_ERYLH</name>
<dbReference type="EC" id="2.7.13.3"/>
<dbReference type="EMBL" id="CP000157">
    <property type="protein sequence ID" value="ABC63064.1"/>
    <property type="molecule type" value="Genomic_DNA"/>
</dbReference>
<dbReference type="RefSeq" id="WP_011413900.1">
    <property type="nucleotide sequence ID" value="NC_007722.1"/>
</dbReference>
<dbReference type="PDB" id="4R38">
    <property type="method" value="X-ray"/>
    <property type="resolution" value="1.60 A"/>
    <property type="chains" value="A/B/C/D=1-134"/>
</dbReference>
<dbReference type="PDB" id="4R39">
    <property type="method" value="X-ray"/>
    <property type="resolution" value="2.60 A"/>
    <property type="chains" value="A/B/C/D=121-346"/>
</dbReference>
<dbReference type="PDB" id="4R3A">
    <property type="method" value="X-ray"/>
    <property type="resolution" value="2.92 A"/>
    <property type="chains" value="A/B=1-346"/>
</dbReference>
<dbReference type="PDBsum" id="4R38"/>
<dbReference type="PDBsum" id="4R39"/>
<dbReference type="PDBsum" id="4R3A"/>
<dbReference type="SMR" id="Q2NB77"/>
<dbReference type="STRING" id="314225.ELI_04860"/>
<dbReference type="KEGG" id="eli:ELI_04860"/>
<dbReference type="eggNOG" id="COG3920">
    <property type="taxonomic scope" value="Bacteria"/>
</dbReference>
<dbReference type="HOGENOM" id="CLU_000445_114_57_5"/>
<dbReference type="OrthoDB" id="136506at2"/>
<dbReference type="EvolutionaryTrace" id="Q2NB77"/>
<dbReference type="Proteomes" id="UP000008808">
    <property type="component" value="Chromosome"/>
</dbReference>
<dbReference type="GO" id="GO:0005524">
    <property type="term" value="F:ATP binding"/>
    <property type="evidence" value="ECO:0007669"/>
    <property type="project" value="UniProtKB-KW"/>
</dbReference>
<dbReference type="GO" id="GO:0009881">
    <property type="term" value="F:photoreceptor activity"/>
    <property type="evidence" value="ECO:0007669"/>
    <property type="project" value="UniProtKB-KW"/>
</dbReference>
<dbReference type="GO" id="GO:0004673">
    <property type="term" value="F:protein histidine kinase activity"/>
    <property type="evidence" value="ECO:0007669"/>
    <property type="project" value="UniProtKB-EC"/>
</dbReference>
<dbReference type="CDD" id="cd16951">
    <property type="entry name" value="HATPase_EL346-LOV-HK-like"/>
    <property type="match status" value="1"/>
</dbReference>
<dbReference type="CDD" id="cd00130">
    <property type="entry name" value="PAS"/>
    <property type="match status" value="1"/>
</dbReference>
<dbReference type="Gene3D" id="3.30.565.10">
    <property type="entry name" value="Histidine kinase-like ATPase, C-terminal domain"/>
    <property type="match status" value="1"/>
</dbReference>
<dbReference type="Gene3D" id="3.30.450.20">
    <property type="entry name" value="PAS domain"/>
    <property type="match status" value="1"/>
</dbReference>
<dbReference type="InterPro" id="IPR036890">
    <property type="entry name" value="HATPase_C_sf"/>
</dbReference>
<dbReference type="InterPro" id="IPR005467">
    <property type="entry name" value="His_kinase_dom"/>
</dbReference>
<dbReference type="InterPro" id="IPR000014">
    <property type="entry name" value="PAS"/>
</dbReference>
<dbReference type="InterPro" id="IPR000700">
    <property type="entry name" value="PAS-assoc_C"/>
</dbReference>
<dbReference type="InterPro" id="IPR035965">
    <property type="entry name" value="PAS-like_dom_sf"/>
</dbReference>
<dbReference type="InterPro" id="IPR004358">
    <property type="entry name" value="Sig_transdc_His_kin-like_C"/>
</dbReference>
<dbReference type="InterPro" id="IPR011495">
    <property type="entry name" value="Sig_transdc_His_kin_sub2_dim/P"/>
</dbReference>
<dbReference type="NCBIfam" id="TIGR00229">
    <property type="entry name" value="sensory_box"/>
    <property type="match status" value="1"/>
</dbReference>
<dbReference type="PANTHER" id="PTHR47429">
    <property type="entry name" value="PROTEIN TWIN LOV 1"/>
    <property type="match status" value="1"/>
</dbReference>
<dbReference type="PANTHER" id="PTHR47429:SF2">
    <property type="entry name" value="PROTEIN TWIN LOV 1"/>
    <property type="match status" value="1"/>
</dbReference>
<dbReference type="Pfam" id="PF02518">
    <property type="entry name" value="HATPase_c"/>
    <property type="match status" value="1"/>
</dbReference>
<dbReference type="Pfam" id="PF07568">
    <property type="entry name" value="HisKA_2"/>
    <property type="match status" value="1"/>
</dbReference>
<dbReference type="Pfam" id="PF13426">
    <property type="entry name" value="PAS_9"/>
    <property type="match status" value="1"/>
</dbReference>
<dbReference type="PRINTS" id="PR00344">
    <property type="entry name" value="BCTRLSENSOR"/>
</dbReference>
<dbReference type="SMART" id="SM00387">
    <property type="entry name" value="HATPase_c"/>
    <property type="match status" value="1"/>
</dbReference>
<dbReference type="SUPFAM" id="SSF55874">
    <property type="entry name" value="ATPase domain of HSP90 chaperone/DNA topoisomerase II/histidine kinase"/>
    <property type="match status" value="1"/>
</dbReference>
<dbReference type="SUPFAM" id="SSF55785">
    <property type="entry name" value="PYP-like sensor domain (PAS domain)"/>
    <property type="match status" value="1"/>
</dbReference>
<dbReference type="PROSITE" id="PS50109">
    <property type="entry name" value="HIS_KIN"/>
    <property type="match status" value="1"/>
</dbReference>
<dbReference type="PROSITE" id="PS50113">
    <property type="entry name" value="PAC"/>
    <property type="match status" value="1"/>
</dbReference>
<dbReference type="PROSITE" id="PS50112">
    <property type="entry name" value="PAS"/>
    <property type="match status" value="1"/>
</dbReference>
<protein>
    <recommendedName>
        <fullName>Blue-light-activated histidine kinase 2</fullName>
        <ecNumber>2.7.13.3</ecNumber>
    </recommendedName>
    <alternativeName>
        <fullName>EL346-LOV-histidine kinase</fullName>
        <shortName>EL346-LOV-HK</shortName>
    </alternativeName>
</protein>
<sequence length="346" mass="37948">MAVGLAEHDKEAWGRLPFSLTIADISQDDEPLIYVNRAFEQMTGYSRSSVVGRNCRFLQGEKTDPGAVERLAKAIRNCEEVEETIYNYRADGEGFWNHLLMGPLEDQDEKCRYFVGIQVDMGQSESPDRATELDRQLAEVQHRVKNHLAMIVSMIRIQSSQAGGVGSQFDSLSRRVEALQLLYQEMDIAGAAKATDKIIPLGAYLGRIASAINHIDGRGAIKVNVQADTVDVPVETAGRIGLLVSEVLTNALQHAFSDRASGVVQLRSSVMSGEQLRVTVEDDGRGIPEDCDWPNEGNLGSRIVRQLVQGLGAELNVTRGGTGTIVNIDIPLSQQKTLIADERTKD</sequence>
<comment type="function">
    <text evidence="4">Photosensitive kinase that is involved in increased bacterial virulence upon exposure to light.</text>
</comment>
<comment type="catalytic activity">
    <reaction>
        <text>ATP + protein L-histidine = ADP + protein N-phospho-L-histidine.</text>
        <dbReference type="EC" id="2.7.13.3"/>
    </reaction>
</comment>
<comment type="PTM">
    <text>FMN binds covalently to cysteine after exposure to blue light and this bond is spontaneously broken in the dark.</text>
</comment>
<proteinExistence type="evidence at protein level"/>
<keyword id="KW-0002">3D-structure</keyword>
<keyword id="KW-0067">ATP-binding</keyword>
<keyword id="KW-0157">Chromophore</keyword>
<keyword id="KW-0285">Flavoprotein</keyword>
<keyword id="KW-0288">FMN</keyword>
<keyword id="KW-0418">Kinase</keyword>
<keyword id="KW-0547">Nucleotide-binding</keyword>
<keyword id="KW-0597">Phosphoprotein</keyword>
<keyword id="KW-0600">Photoreceptor protein</keyword>
<keyword id="KW-0675">Receptor</keyword>
<keyword id="KW-1185">Reference proteome</keyword>
<keyword id="KW-0716">Sensory transduction</keyword>
<keyword id="KW-0808">Transferase</keyword>
<keyword id="KW-0843">Virulence</keyword>